<gene>
    <name evidence="1" type="primary">aroC</name>
    <name type="ordered locus">BLD_0612</name>
</gene>
<sequence>MLRWQTAGESHGEALVAMIEGLPAGVRISTDDIVSALARRRLGYGRGARMKFEQDKVRLLTGVRHGLTLGSPVAIEIANTEWPKWTEVMSADALDHDLPREGRNAPLSRPRPGHADLTGMRKYGFDDARPVLERSSARETASRVALGEVAKQFLDQAFGIRTVAHVVALGGVQTNPDLPLPTPDDLEALDASPVRTLDKEAEARIIERINEAKKASDTLGGVIEVLAYGVPAGIGTYVESDRRLDAALASAIMGIQAFKGVEIGDGFLEASRPGSQAHDEIVVNADGRIDRLSNRAGGIEGGMSNGQVIRVRGAMKPIPSIPKALRTVDVLTGESAQAINQRSDSTAVPAASVVAEAMVRLTLAKYALDKFGGDSVAETRRNLESYLASWPEHMR</sequence>
<dbReference type="EC" id="4.2.3.5" evidence="1"/>
<dbReference type="EMBL" id="CP000605">
    <property type="protein sequence ID" value="ACD98058.1"/>
    <property type="molecule type" value="Genomic_DNA"/>
</dbReference>
<dbReference type="RefSeq" id="WP_007052139.1">
    <property type="nucleotide sequence ID" value="NZ_AABM02000001.1"/>
</dbReference>
<dbReference type="SMR" id="B3DSD9"/>
<dbReference type="GeneID" id="69577981"/>
<dbReference type="KEGG" id="blj:BLD_0612"/>
<dbReference type="HOGENOM" id="CLU_034547_2_0_11"/>
<dbReference type="UniPathway" id="UPA00053">
    <property type="reaction ID" value="UER00090"/>
</dbReference>
<dbReference type="Proteomes" id="UP000002419">
    <property type="component" value="Chromosome"/>
</dbReference>
<dbReference type="GO" id="GO:0005829">
    <property type="term" value="C:cytosol"/>
    <property type="evidence" value="ECO:0007669"/>
    <property type="project" value="TreeGrafter"/>
</dbReference>
<dbReference type="GO" id="GO:0004107">
    <property type="term" value="F:chorismate synthase activity"/>
    <property type="evidence" value="ECO:0007669"/>
    <property type="project" value="UniProtKB-UniRule"/>
</dbReference>
<dbReference type="GO" id="GO:0010181">
    <property type="term" value="F:FMN binding"/>
    <property type="evidence" value="ECO:0007669"/>
    <property type="project" value="TreeGrafter"/>
</dbReference>
<dbReference type="GO" id="GO:0008652">
    <property type="term" value="P:amino acid biosynthetic process"/>
    <property type="evidence" value="ECO:0007669"/>
    <property type="project" value="UniProtKB-KW"/>
</dbReference>
<dbReference type="GO" id="GO:0009073">
    <property type="term" value="P:aromatic amino acid family biosynthetic process"/>
    <property type="evidence" value="ECO:0007669"/>
    <property type="project" value="UniProtKB-KW"/>
</dbReference>
<dbReference type="GO" id="GO:0009423">
    <property type="term" value="P:chorismate biosynthetic process"/>
    <property type="evidence" value="ECO:0007669"/>
    <property type="project" value="UniProtKB-UniRule"/>
</dbReference>
<dbReference type="CDD" id="cd07304">
    <property type="entry name" value="Chorismate_synthase"/>
    <property type="match status" value="1"/>
</dbReference>
<dbReference type="FunFam" id="3.60.150.10:FF:000002">
    <property type="entry name" value="Chorismate synthase"/>
    <property type="match status" value="1"/>
</dbReference>
<dbReference type="Gene3D" id="3.60.150.10">
    <property type="entry name" value="Chorismate synthase AroC"/>
    <property type="match status" value="1"/>
</dbReference>
<dbReference type="HAMAP" id="MF_00300">
    <property type="entry name" value="Chorismate_synth"/>
    <property type="match status" value="1"/>
</dbReference>
<dbReference type="InterPro" id="IPR000453">
    <property type="entry name" value="Chorismate_synth"/>
</dbReference>
<dbReference type="InterPro" id="IPR035904">
    <property type="entry name" value="Chorismate_synth_AroC_sf"/>
</dbReference>
<dbReference type="InterPro" id="IPR020541">
    <property type="entry name" value="Chorismate_synthase_CS"/>
</dbReference>
<dbReference type="NCBIfam" id="TIGR00033">
    <property type="entry name" value="aroC"/>
    <property type="match status" value="1"/>
</dbReference>
<dbReference type="NCBIfam" id="NF003793">
    <property type="entry name" value="PRK05382.1"/>
    <property type="match status" value="1"/>
</dbReference>
<dbReference type="PANTHER" id="PTHR21085">
    <property type="entry name" value="CHORISMATE SYNTHASE"/>
    <property type="match status" value="1"/>
</dbReference>
<dbReference type="PANTHER" id="PTHR21085:SF0">
    <property type="entry name" value="CHORISMATE SYNTHASE"/>
    <property type="match status" value="1"/>
</dbReference>
<dbReference type="Pfam" id="PF01264">
    <property type="entry name" value="Chorismate_synt"/>
    <property type="match status" value="1"/>
</dbReference>
<dbReference type="PIRSF" id="PIRSF001456">
    <property type="entry name" value="Chorismate_synth"/>
    <property type="match status" value="1"/>
</dbReference>
<dbReference type="SUPFAM" id="SSF103263">
    <property type="entry name" value="Chorismate synthase, AroC"/>
    <property type="match status" value="1"/>
</dbReference>
<dbReference type="PROSITE" id="PS00787">
    <property type="entry name" value="CHORISMATE_SYNTHASE_1"/>
    <property type="match status" value="1"/>
</dbReference>
<dbReference type="PROSITE" id="PS00789">
    <property type="entry name" value="CHORISMATE_SYNTHASE_3"/>
    <property type="match status" value="1"/>
</dbReference>
<feature type="chain" id="PRO_1000115329" description="Chorismate synthase">
    <location>
        <begin position="1"/>
        <end position="395"/>
    </location>
</feature>
<feature type="region of interest" description="Disordered" evidence="2">
    <location>
        <begin position="99"/>
        <end position="120"/>
    </location>
</feature>
<feature type="binding site" evidence="1">
    <location>
        <position position="40"/>
    </location>
    <ligand>
        <name>NADP(+)</name>
        <dbReference type="ChEBI" id="CHEBI:58349"/>
    </ligand>
</feature>
<feature type="binding site" evidence="1">
    <location>
        <position position="46"/>
    </location>
    <ligand>
        <name>NADP(+)</name>
        <dbReference type="ChEBI" id="CHEBI:58349"/>
    </ligand>
</feature>
<feature type="binding site" evidence="1">
    <location>
        <begin position="134"/>
        <end position="136"/>
    </location>
    <ligand>
        <name>FMN</name>
        <dbReference type="ChEBI" id="CHEBI:58210"/>
    </ligand>
</feature>
<feature type="binding site" evidence="1">
    <location>
        <begin position="256"/>
        <end position="257"/>
    </location>
    <ligand>
        <name>FMN</name>
        <dbReference type="ChEBI" id="CHEBI:58210"/>
    </ligand>
</feature>
<feature type="binding site" evidence="1">
    <location>
        <position position="301"/>
    </location>
    <ligand>
        <name>FMN</name>
        <dbReference type="ChEBI" id="CHEBI:58210"/>
    </ligand>
</feature>
<feature type="binding site" evidence="1">
    <location>
        <begin position="316"/>
        <end position="320"/>
    </location>
    <ligand>
        <name>FMN</name>
        <dbReference type="ChEBI" id="CHEBI:58210"/>
    </ligand>
</feature>
<feature type="binding site" evidence="1">
    <location>
        <position position="342"/>
    </location>
    <ligand>
        <name>FMN</name>
        <dbReference type="ChEBI" id="CHEBI:58210"/>
    </ligand>
</feature>
<protein>
    <recommendedName>
        <fullName evidence="1">Chorismate synthase</fullName>
        <shortName evidence="1">CS</shortName>
        <ecNumber evidence="1">4.2.3.5</ecNumber>
    </recommendedName>
    <alternativeName>
        <fullName evidence="1">5-enolpyruvylshikimate-3-phosphate phospholyase</fullName>
    </alternativeName>
</protein>
<keyword id="KW-0028">Amino-acid biosynthesis</keyword>
<keyword id="KW-0057">Aromatic amino acid biosynthesis</keyword>
<keyword id="KW-0274">FAD</keyword>
<keyword id="KW-0285">Flavoprotein</keyword>
<keyword id="KW-0288">FMN</keyword>
<keyword id="KW-0456">Lyase</keyword>
<keyword id="KW-0521">NADP</keyword>
<proteinExistence type="inferred from homology"/>
<reference key="1">
    <citation type="journal article" date="2008" name="BMC Genomics">
        <title>Comparative genomic analysis of the gut bacterium Bifidobacterium longum reveals loci susceptible to deletion during pure culture growth.</title>
        <authorList>
            <person name="Lee J.H."/>
            <person name="Karamychev V.N."/>
            <person name="Kozyavkin S.A."/>
            <person name="Mills D."/>
            <person name="Pavlov A.R."/>
            <person name="Pavlova N.V."/>
            <person name="Polouchine N.N."/>
            <person name="Richardson P.M."/>
            <person name="Shakhova V.V."/>
            <person name="Slesarev A.I."/>
            <person name="Weimer B."/>
            <person name="O'Sullivan D.J."/>
        </authorList>
    </citation>
    <scope>NUCLEOTIDE SEQUENCE [LARGE SCALE GENOMIC DNA]</scope>
    <source>
        <strain>DJO10A</strain>
    </source>
</reference>
<accession>B3DSD9</accession>
<evidence type="ECO:0000255" key="1">
    <source>
        <dbReference type="HAMAP-Rule" id="MF_00300"/>
    </source>
</evidence>
<evidence type="ECO:0000256" key="2">
    <source>
        <dbReference type="SAM" id="MobiDB-lite"/>
    </source>
</evidence>
<name>AROC_BIFLD</name>
<organism>
    <name type="scientific">Bifidobacterium longum (strain DJO10A)</name>
    <dbReference type="NCBI Taxonomy" id="205913"/>
    <lineage>
        <taxon>Bacteria</taxon>
        <taxon>Bacillati</taxon>
        <taxon>Actinomycetota</taxon>
        <taxon>Actinomycetes</taxon>
        <taxon>Bifidobacteriales</taxon>
        <taxon>Bifidobacteriaceae</taxon>
        <taxon>Bifidobacterium</taxon>
    </lineage>
</organism>
<comment type="function">
    <text evidence="1">Catalyzes the anti-1,4-elimination of the C-3 phosphate and the C-6 proR hydrogen from 5-enolpyruvylshikimate-3-phosphate (EPSP) to yield chorismate, which is the branch point compound that serves as the starting substrate for the three terminal pathways of aromatic amino acid biosynthesis. This reaction introduces a second double bond into the aromatic ring system.</text>
</comment>
<comment type="catalytic activity">
    <reaction evidence="1">
        <text>5-O-(1-carboxyvinyl)-3-phosphoshikimate = chorismate + phosphate</text>
        <dbReference type="Rhea" id="RHEA:21020"/>
        <dbReference type="ChEBI" id="CHEBI:29748"/>
        <dbReference type="ChEBI" id="CHEBI:43474"/>
        <dbReference type="ChEBI" id="CHEBI:57701"/>
        <dbReference type="EC" id="4.2.3.5"/>
    </reaction>
</comment>
<comment type="cofactor">
    <cofactor evidence="1">
        <name>FMNH2</name>
        <dbReference type="ChEBI" id="CHEBI:57618"/>
    </cofactor>
    <text evidence="1">Reduced FMN (FMNH(2)).</text>
</comment>
<comment type="pathway">
    <text evidence="1">Metabolic intermediate biosynthesis; chorismate biosynthesis; chorismate from D-erythrose 4-phosphate and phosphoenolpyruvate: step 7/7.</text>
</comment>
<comment type="subunit">
    <text evidence="1">Homotetramer.</text>
</comment>
<comment type="similarity">
    <text evidence="1">Belongs to the chorismate synthase family.</text>
</comment>